<feature type="chain" id="PRO_1000115661" description="A-type ATP synthase subunit B">
    <location>
        <begin position="1"/>
        <end position="462"/>
    </location>
</feature>
<name>AATB_METM6</name>
<keyword id="KW-0066">ATP synthesis</keyword>
<keyword id="KW-1003">Cell membrane</keyword>
<keyword id="KW-0375">Hydrogen ion transport</keyword>
<keyword id="KW-0406">Ion transport</keyword>
<keyword id="KW-0472">Membrane</keyword>
<keyword id="KW-0813">Transport</keyword>
<dbReference type="EMBL" id="CP000867">
    <property type="protein sequence ID" value="ABX02426.1"/>
    <property type="molecule type" value="Genomic_DNA"/>
</dbReference>
<dbReference type="SMR" id="A9AAQ3"/>
<dbReference type="STRING" id="444158.MmarC6_1614"/>
<dbReference type="KEGG" id="mmx:MmarC6_1614"/>
<dbReference type="eggNOG" id="arCOG00865">
    <property type="taxonomic scope" value="Archaea"/>
</dbReference>
<dbReference type="HOGENOM" id="CLU_022916_0_0_2"/>
<dbReference type="OrthoDB" id="32941at2157"/>
<dbReference type="PhylomeDB" id="A9AAQ3"/>
<dbReference type="GO" id="GO:0005886">
    <property type="term" value="C:plasma membrane"/>
    <property type="evidence" value="ECO:0007669"/>
    <property type="project" value="UniProtKB-SubCell"/>
</dbReference>
<dbReference type="GO" id="GO:0005524">
    <property type="term" value="F:ATP binding"/>
    <property type="evidence" value="ECO:0007669"/>
    <property type="project" value="UniProtKB-UniRule"/>
</dbReference>
<dbReference type="GO" id="GO:0046933">
    <property type="term" value="F:proton-transporting ATP synthase activity, rotational mechanism"/>
    <property type="evidence" value="ECO:0007669"/>
    <property type="project" value="UniProtKB-UniRule"/>
</dbReference>
<dbReference type="GO" id="GO:0042777">
    <property type="term" value="P:proton motive force-driven plasma membrane ATP synthesis"/>
    <property type="evidence" value="ECO:0007669"/>
    <property type="project" value="UniProtKB-UniRule"/>
</dbReference>
<dbReference type="CDD" id="cd18112">
    <property type="entry name" value="ATP-synt_V_A-type_beta_C"/>
    <property type="match status" value="1"/>
</dbReference>
<dbReference type="CDD" id="cd18118">
    <property type="entry name" value="ATP-synt_V_A-type_beta_N"/>
    <property type="match status" value="1"/>
</dbReference>
<dbReference type="CDD" id="cd01135">
    <property type="entry name" value="V_A-ATPase_B"/>
    <property type="match status" value="1"/>
</dbReference>
<dbReference type="Gene3D" id="3.40.50.12240">
    <property type="match status" value="1"/>
</dbReference>
<dbReference type="HAMAP" id="MF_00310">
    <property type="entry name" value="ATP_synth_B_arch"/>
    <property type="match status" value="1"/>
</dbReference>
<dbReference type="InterPro" id="IPR055190">
    <property type="entry name" value="ATP-synt_VA_C"/>
</dbReference>
<dbReference type="InterPro" id="IPR020003">
    <property type="entry name" value="ATPase_a/bsu_AS"/>
</dbReference>
<dbReference type="InterPro" id="IPR004100">
    <property type="entry name" value="ATPase_F1/V1/A1_a/bsu_N"/>
</dbReference>
<dbReference type="InterPro" id="IPR000194">
    <property type="entry name" value="ATPase_F1/V1/A1_a/bsu_nucl-bd"/>
</dbReference>
<dbReference type="InterPro" id="IPR027417">
    <property type="entry name" value="P-loop_NTPase"/>
</dbReference>
<dbReference type="InterPro" id="IPR022879">
    <property type="entry name" value="V-ATPase_su_B/beta"/>
</dbReference>
<dbReference type="NCBIfam" id="NF003235">
    <property type="entry name" value="PRK04196.1"/>
    <property type="match status" value="1"/>
</dbReference>
<dbReference type="PANTHER" id="PTHR43389">
    <property type="entry name" value="V-TYPE PROTON ATPASE SUBUNIT B"/>
    <property type="match status" value="1"/>
</dbReference>
<dbReference type="PANTHER" id="PTHR43389:SF4">
    <property type="entry name" value="V-TYPE PROTON ATPASE SUBUNIT B"/>
    <property type="match status" value="1"/>
</dbReference>
<dbReference type="Pfam" id="PF00006">
    <property type="entry name" value="ATP-synt_ab"/>
    <property type="match status" value="1"/>
</dbReference>
<dbReference type="Pfam" id="PF02874">
    <property type="entry name" value="ATP-synt_ab_N"/>
    <property type="match status" value="1"/>
</dbReference>
<dbReference type="Pfam" id="PF22919">
    <property type="entry name" value="ATP-synt_VA_C"/>
    <property type="match status" value="1"/>
</dbReference>
<dbReference type="PIRSF" id="PIRSF039114">
    <property type="entry name" value="V-ATPsynth_beta/V-ATPase_B"/>
    <property type="match status" value="1"/>
</dbReference>
<dbReference type="SUPFAM" id="SSF47917">
    <property type="entry name" value="C-terminal domain of alpha and beta subunits of F1 ATP synthase"/>
    <property type="match status" value="1"/>
</dbReference>
<dbReference type="SUPFAM" id="SSF52540">
    <property type="entry name" value="P-loop containing nucleoside triphosphate hydrolases"/>
    <property type="match status" value="1"/>
</dbReference>
<dbReference type="PROSITE" id="PS00152">
    <property type="entry name" value="ATPASE_ALPHA_BETA"/>
    <property type="match status" value="1"/>
</dbReference>
<organism>
    <name type="scientific">Methanococcus maripaludis (strain C6 / ATCC BAA-1332)</name>
    <dbReference type="NCBI Taxonomy" id="444158"/>
    <lineage>
        <taxon>Archaea</taxon>
        <taxon>Methanobacteriati</taxon>
        <taxon>Methanobacteriota</taxon>
        <taxon>Methanomada group</taxon>
        <taxon>Methanococci</taxon>
        <taxon>Methanococcales</taxon>
        <taxon>Methanococcaceae</taxon>
        <taxon>Methanococcus</taxon>
    </lineage>
</organism>
<evidence type="ECO:0000255" key="1">
    <source>
        <dbReference type="HAMAP-Rule" id="MF_00310"/>
    </source>
</evidence>
<sequence>MDAMQKTIEYTSVSRIAGPLMVIDGIEGVAYGEIVDITTPNGEKRTGQVLEAREEIAVVQVFEGTSELNTSETKVRFTGDTAKIGVSYDMLGRIFNGAGKPLDGGPEIIAEKKLDINGYPLNPVSRNPPNAFVQTGISTIDGTNTLVRGQKIPIFSGSGLPHNKLATQIARQAKVRGEGEQFAVVFAAMGITGEESNYFMDEFKKTGALEKAVVFINLADDPAIERILTPRIALTTAEYLAYEKGMHVLVILTDLTNYCEALREIAAARNEVPGRRGYPGYMYTDLACLYERAGRVKGREGTVTQIPILTMPDDDITHPIPDLTGYITEGQIVLSRELNRKGIYPPVDILPSLSRLAGNGQGEGKTRDDHSKVISQAYAAYAEGRGLRDLVAVVGEEALTERDRSFLKFADAFENSIVTQGVDEDRSIEETLDYVWDLLTILPREELKRVSDELIEKYLPKK</sequence>
<accession>A9AAQ3</accession>
<gene>
    <name evidence="1" type="primary">atpB</name>
    <name type="ordered locus">MmarC6_1614</name>
</gene>
<comment type="function">
    <text evidence="1">Component of the A-type ATP synthase that produces ATP from ADP in the presence of a proton gradient across the membrane. The B chain is a regulatory subunit.</text>
</comment>
<comment type="subunit">
    <text evidence="1">Has multiple subunits with at least A(3), B(3), C, D, E, F, H, I and proteolipid K(x).</text>
</comment>
<comment type="subcellular location">
    <subcellularLocation>
        <location evidence="1">Cell membrane</location>
        <topology evidence="1">Peripheral membrane protein</topology>
    </subcellularLocation>
</comment>
<comment type="similarity">
    <text evidence="1">Belongs to the ATPase alpha/beta chains family.</text>
</comment>
<protein>
    <recommendedName>
        <fullName evidence="1">A-type ATP synthase subunit B</fullName>
    </recommendedName>
</protein>
<proteinExistence type="inferred from homology"/>
<reference key="1">
    <citation type="submission" date="2007-10" db="EMBL/GenBank/DDBJ databases">
        <title>Complete sequence of Methanococcus maripaludis C6.</title>
        <authorList>
            <consortium name="US DOE Joint Genome Institute"/>
            <person name="Copeland A."/>
            <person name="Lucas S."/>
            <person name="Lapidus A."/>
            <person name="Barry K."/>
            <person name="Glavina del Rio T."/>
            <person name="Dalin E."/>
            <person name="Tice H."/>
            <person name="Pitluck S."/>
            <person name="Clum A."/>
            <person name="Schmutz J."/>
            <person name="Larimer F."/>
            <person name="Land M."/>
            <person name="Hauser L."/>
            <person name="Kyrpides N."/>
            <person name="Mikhailova N."/>
            <person name="Sieprawska-Lupa M."/>
            <person name="Whitman W.B."/>
            <person name="Richardson P."/>
        </authorList>
    </citation>
    <scope>NUCLEOTIDE SEQUENCE [LARGE SCALE GENOMIC DNA]</scope>
    <source>
        <strain>C6 / ATCC BAA-1332</strain>
    </source>
</reference>